<proteinExistence type="evidence at protein level"/>
<name>VP1_POVMP</name>
<accession>P49302</accession>
<keyword id="KW-0002">3D-structure</keyword>
<keyword id="KW-0167">Capsid protein</keyword>
<keyword id="KW-1166">Caveolin-mediated endocytosis of virus by host</keyword>
<keyword id="KW-1015">Disulfide bond</keyword>
<keyword id="KW-1048">Host nucleus</keyword>
<keyword id="KW-0945">Host-virus interaction</keyword>
<keyword id="KW-0426">Late protein</keyword>
<keyword id="KW-0597">Phosphoprotein</keyword>
<keyword id="KW-1145">T=7 icosahedral capsid protein</keyword>
<keyword id="KW-1161">Viral attachment to host cell</keyword>
<keyword id="KW-1162">Viral penetration into host cytoplasm</keyword>
<keyword id="KW-0946">Virion</keyword>
<keyword id="KW-1164">Virus endocytosis by host</keyword>
<keyword id="KW-1160">Virus entry into host cell</keyword>
<dbReference type="EMBL" id="M34958">
    <property type="protein sequence ID" value="AAA46561.1"/>
    <property type="molecule type" value="Genomic_DNA"/>
</dbReference>
<dbReference type="PDB" id="1CN3">
    <property type="method" value="X-ray"/>
    <property type="resolution" value="2.20 A"/>
    <property type="chains" value="A/B/C/D/E=35-317"/>
</dbReference>
<dbReference type="PDB" id="1SID">
    <property type="method" value="X-ray"/>
    <property type="resolution" value="3.65 A"/>
    <property type="chains" value="A/B/C/D/E/F=2-384"/>
</dbReference>
<dbReference type="PDB" id="1SIE">
    <property type="method" value="X-ray"/>
    <property type="resolution" value="3.65 A"/>
    <property type="chains" value="A/B/C/D/E/F=2-384"/>
</dbReference>
<dbReference type="PDB" id="1VPN">
    <property type="method" value="X-ray"/>
    <property type="resolution" value="2.00 A"/>
    <property type="chains" value="A/B/C/D/E=33-321"/>
</dbReference>
<dbReference type="PDB" id="1VPS">
    <property type="method" value="X-ray"/>
    <property type="resolution" value="1.90 A"/>
    <property type="chains" value="A/B/C/D/E=33-321"/>
</dbReference>
<dbReference type="PDB" id="5CPU">
    <property type="method" value="X-ray"/>
    <property type="resolution" value="1.64 A"/>
    <property type="chains" value="A/B/C/D/E=34-317"/>
</dbReference>
<dbReference type="PDB" id="5CPW">
    <property type="method" value="X-ray"/>
    <property type="resolution" value="1.75 A"/>
    <property type="chains" value="A/B/C/D/E=34-317"/>
</dbReference>
<dbReference type="PDB" id="5CPX">
    <property type="method" value="X-ray"/>
    <property type="resolution" value="1.87 A"/>
    <property type="chains" value="A/B/C/D/E=34-317"/>
</dbReference>
<dbReference type="PDB" id="5CPY">
    <property type="method" value="X-ray"/>
    <property type="resolution" value="1.93 A"/>
    <property type="chains" value="A/B/C/D/E=34-317"/>
</dbReference>
<dbReference type="PDB" id="5CPZ">
    <property type="method" value="X-ray"/>
    <property type="resolution" value="1.71 A"/>
    <property type="chains" value="A/B/C/D/E=34-317"/>
</dbReference>
<dbReference type="PDB" id="5CQ0">
    <property type="method" value="X-ray"/>
    <property type="resolution" value="1.90 A"/>
    <property type="chains" value="A/B/C/D/E=34-317"/>
</dbReference>
<dbReference type="PDB" id="7K25">
    <property type="method" value="EM"/>
    <property type="resolution" value="2.90 A"/>
    <property type="chains" value="A/B/C/D/E=2-384"/>
</dbReference>
<dbReference type="PDBsum" id="1CN3"/>
<dbReference type="PDBsum" id="1SID"/>
<dbReference type="PDBsum" id="1SIE"/>
<dbReference type="PDBsum" id="1VPN"/>
<dbReference type="PDBsum" id="1VPS"/>
<dbReference type="PDBsum" id="5CPU"/>
<dbReference type="PDBsum" id="5CPW"/>
<dbReference type="PDBsum" id="5CPX"/>
<dbReference type="PDBsum" id="5CPY"/>
<dbReference type="PDBsum" id="5CPZ"/>
<dbReference type="PDBsum" id="5CQ0"/>
<dbReference type="PDBsum" id="7K25"/>
<dbReference type="SMR" id="P49302"/>
<dbReference type="DrugBank" id="DB02379">
    <property type="generic name" value="Beta-D-Glucose"/>
</dbReference>
<dbReference type="DrugBank" id="DB03721">
    <property type="generic name" value="N-acetyl-alpha-neuraminic acid"/>
</dbReference>
<dbReference type="TCDB" id="1.A.83.1.5">
    <property type="family name" value="the sv40 virus viroporin vp2 (sv40 vp2) family"/>
</dbReference>
<dbReference type="UniLectin" id="P49302"/>
<dbReference type="EvolutionaryTrace" id="P49302"/>
<dbReference type="GO" id="GO:0042025">
    <property type="term" value="C:host cell nucleus"/>
    <property type="evidence" value="ECO:0007669"/>
    <property type="project" value="UniProtKB-SubCell"/>
</dbReference>
<dbReference type="GO" id="GO:0039620">
    <property type="term" value="C:T=7 icosahedral viral capsid"/>
    <property type="evidence" value="ECO:0007669"/>
    <property type="project" value="UniProtKB-KW"/>
</dbReference>
<dbReference type="GO" id="GO:0005198">
    <property type="term" value="F:structural molecule activity"/>
    <property type="evidence" value="ECO:0007669"/>
    <property type="project" value="InterPro"/>
</dbReference>
<dbReference type="GO" id="GO:0075513">
    <property type="term" value="P:caveolin-mediated endocytosis of virus by host cell"/>
    <property type="evidence" value="ECO:0007669"/>
    <property type="project" value="UniProtKB-KW"/>
</dbReference>
<dbReference type="GO" id="GO:0019062">
    <property type="term" value="P:virion attachment to host cell"/>
    <property type="evidence" value="ECO:0007669"/>
    <property type="project" value="UniProtKB-KW"/>
</dbReference>
<dbReference type="Gene3D" id="2.60.175.10">
    <property type="entry name" value="Capsid protein VP1,Polyomavirus"/>
    <property type="match status" value="1"/>
</dbReference>
<dbReference type="InterPro" id="IPR000662">
    <property type="entry name" value="Capsid_VP1_Polyomavir"/>
</dbReference>
<dbReference type="InterPro" id="IPR011222">
    <property type="entry name" value="dsDNA_vir_gr_I_capsid"/>
</dbReference>
<dbReference type="InterPro" id="IPR036931">
    <property type="entry name" value="Polyomavir_VP1_sf"/>
</dbReference>
<dbReference type="Pfam" id="PF00718">
    <property type="entry name" value="Polyoma_coat"/>
    <property type="match status" value="1"/>
</dbReference>
<dbReference type="PIRSF" id="PIRSF003376">
    <property type="entry name" value="Capsid_VP1_Polyomavir"/>
    <property type="match status" value="1"/>
</dbReference>
<dbReference type="SUPFAM" id="SSF88648">
    <property type="entry name" value="Group I dsDNA viruses"/>
    <property type="match status" value="1"/>
</dbReference>
<protein>
    <recommendedName>
        <fullName>Capsid protein VP1</fullName>
    </recommendedName>
</protein>
<feature type="initiator methionine" description="Removed; by host">
    <location>
        <position position="1"/>
    </location>
</feature>
<feature type="chain" id="PRO_0000115025" description="Capsid protein VP1">
    <location>
        <begin position="2"/>
        <end position="384"/>
    </location>
</feature>
<feature type="region of interest" description="C-terminal arm" evidence="2">
    <location>
        <begin position="322"/>
        <end position="384"/>
    </location>
</feature>
<feature type="short sequence motif" description="Bipartite nuclear localization signal" evidence="2">
    <location>
        <begin position="4"/>
        <end position="18"/>
    </location>
</feature>
<feature type="modified residue" description="Phosphothreonine; by host" evidence="1">
    <location>
        <position position="358"/>
    </location>
</feature>
<feature type="disulfide bond" description="Interchain" evidence="1">
    <location>
        <position position="12"/>
    </location>
</feature>
<feature type="disulfide bond" description="Interchain" evidence="1">
    <location>
        <position position="115"/>
    </location>
</feature>
<feature type="strand" evidence="5">
    <location>
        <begin position="36"/>
        <end position="40"/>
    </location>
</feature>
<feature type="strand" evidence="5">
    <location>
        <begin position="47"/>
        <end position="54"/>
    </location>
</feature>
<feature type="strand" evidence="5">
    <location>
        <begin position="58"/>
        <end position="60"/>
    </location>
</feature>
<feature type="turn" evidence="5">
    <location>
        <begin position="67"/>
        <end position="70"/>
    </location>
</feature>
<feature type="helix" evidence="5">
    <location>
        <begin position="71"/>
        <end position="73"/>
    </location>
</feature>
<feature type="strand" evidence="6">
    <location>
        <begin position="84"/>
        <end position="87"/>
    </location>
</feature>
<feature type="helix" evidence="5">
    <location>
        <begin position="93"/>
        <end position="95"/>
    </location>
</feature>
<feature type="strand" evidence="5">
    <location>
        <begin position="100"/>
        <end position="105"/>
    </location>
</feature>
<feature type="strand" evidence="5">
    <location>
        <begin position="118"/>
        <end position="130"/>
    </location>
</feature>
<feature type="helix" evidence="5">
    <location>
        <begin position="133"/>
        <end position="137"/>
    </location>
</feature>
<feature type="strand" evidence="5">
    <location>
        <begin position="141"/>
        <end position="143"/>
    </location>
</feature>
<feature type="strand" evidence="5">
    <location>
        <begin position="145"/>
        <end position="147"/>
    </location>
</feature>
<feature type="turn" evidence="5">
    <location>
        <begin position="148"/>
        <end position="151"/>
    </location>
</feature>
<feature type="strand" evidence="5">
    <location>
        <begin position="152"/>
        <end position="155"/>
    </location>
</feature>
<feature type="strand" evidence="6">
    <location>
        <begin position="158"/>
        <end position="160"/>
    </location>
</feature>
<feature type="strand" evidence="5">
    <location>
        <begin position="162"/>
        <end position="171"/>
    </location>
</feature>
<feature type="strand" evidence="5">
    <location>
        <begin position="174"/>
        <end position="177"/>
    </location>
</feature>
<feature type="strand" evidence="5">
    <location>
        <begin position="188"/>
        <end position="191"/>
    </location>
</feature>
<feature type="helix" evidence="5">
    <location>
        <begin position="194"/>
        <end position="198"/>
    </location>
</feature>
<feature type="helix" evidence="5">
    <location>
        <begin position="204"/>
        <end position="207"/>
    </location>
</feature>
<feature type="strand" evidence="5">
    <location>
        <begin position="214"/>
        <end position="216"/>
    </location>
</feature>
<feature type="strand" evidence="6">
    <location>
        <begin position="219"/>
        <end position="221"/>
    </location>
</feature>
<feature type="turn" evidence="5">
    <location>
        <begin position="225"/>
        <end position="227"/>
    </location>
</feature>
<feature type="strand" evidence="5">
    <location>
        <begin position="228"/>
        <end position="230"/>
    </location>
</feature>
<feature type="strand" evidence="5">
    <location>
        <begin position="238"/>
        <end position="245"/>
    </location>
</feature>
<feature type="strand" evidence="5">
    <location>
        <begin position="253"/>
        <end position="259"/>
    </location>
</feature>
<feature type="helix" evidence="5">
    <location>
        <begin position="275"/>
        <end position="277"/>
    </location>
</feature>
<feature type="strand" evidence="5">
    <location>
        <begin position="278"/>
        <end position="291"/>
    </location>
</feature>
<feature type="strand" evidence="5">
    <location>
        <begin position="298"/>
        <end position="302"/>
    </location>
</feature>
<feature type="strand" evidence="5">
    <location>
        <begin position="305"/>
        <end position="317"/>
    </location>
</feature>
<feature type="turn" evidence="6">
    <location>
        <begin position="324"/>
        <end position="326"/>
    </location>
</feature>
<feature type="strand" evidence="6">
    <location>
        <begin position="369"/>
        <end position="371"/>
    </location>
</feature>
<feature type="strand" evidence="6">
    <location>
        <begin position="373"/>
        <end position="378"/>
    </location>
</feature>
<comment type="function">
    <text evidence="2 4">Forms an icosahedral capsid with a T=7 symmetry and a 40 nm diameter. The capsid is composed of 72 pentamers linked to each other by disulfide bonds and associated with VP2 or VP3 proteins. Interacts with terminal alpha(2,3)-linked sialic acids on the cell surface to provide virion attachment to target cell. This attachment induces virion internalization predominantly through caveolin-mediated endocytosis. Once attached, the virion is internalized by caveolin-mediated endocytosis and traffics to the endoplasmic reticulum. Inside the endoplasmic reticulum, the protein folding machinery isomerizes VP1 interpentamer disulfide bonds, thereby triggering initial uncoating. Next, the virion uses the endoplasmic reticulum-associated degradation machinery to probably translocate in the cytosol before reaching the nucleus. Nuclear entry of the viral DNA involves the selective exposure and importin recognition of VP2/Vp3 nuclear localization signal. In late phase of infection, neo-synthesized VP1 encapsulates replicated genomic DNA in the nucleus, and participates in rearranging nucleosomes around the viral DNA.</text>
</comment>
<comment type="subunit">
    <text evidence="2">Homomultimer; disulfide-linked. The virus capsid is composed of 72 icosahedral units, each one composed of five disulfide-linked copies of VP1. Interacts with minor capsid proteins VP2 and VP3.</text>
</comment>
<comment type="subcellular location">
    <subcellularLocation>
        <location>Virion</location>
    </subcellularLocation>
    <subcellularLocation>
        <location evidence="2">Host nucleus</location>
    </subcellularLocation>
</comment>
<comment type="domain">
    <text evidence="2">A DNA-binding domain overlapping a bipartite nuclear localization signal is present in the N-terminal region of the protein and is required for efficient virus formation.</text>
</comment>
<comment type="domain">
    <text evidence="2">The intrinsically disordered C-terminal arm interacts with neighboring pentamers. The unstructured nature of this region allows to make different interactions depending on the structural context: pentamers present at the 12 icosahedral fivefold axes bind five pentamers, whereas pentamers present at the 60 icosahedral six-fold axes interact with six pentamers.</text>
</comment>
<comment type="similarity">
    <text evidence="3">Belongs to the polyomaviruses coat protein VP1 family.</text>
</comment>
<comment type="online information" name="Virus Particle ExploreR db">
    <link uri="https://viperdb.org/Info_Page.php?VDB=1sid"/>
    <text>Icosahedral capsid structure in complex with 3'sialyl lactose</text>
</comment>
<comment type="online information" name="Virus Particle ExploreR db">
    <link uri="https://viperdb.org/Info_Page.php?VDB=1sie"/>
    <text>Icosahedral capsid structure in complex with a disialylated oligosaccharide</text>
</comment>
<organism>
    <name type="scientific">Murine polyomavirus (strain P16 small-plaque)</name>
    <name type="common">MPyV</name>
    <dbReference type="NCBI Taxonomy" id="47935"/>
    <lineage>
        <taxon>Viruses</taxon>
        <taxon>Monodnaviria</taxon>
        <taxon>Shotokuvirae</taxon>
        <taxon>Cossaviricota</taxon>
        <taxon>Papovaviricetes</taxon>
        <taxon>Sepolyvirales</taxon>
        <taxon>Polyomaviridae</taxon>
        <taxon>Alphapolyomavirus</taxon>
        <taxon>Mus musculus polyomavirus 1</taxon>
    </lineage>
</organism>
<reference key="1">
    <citation type="journal article" date="1991" name="J. Virol.">
        <title>A single-amino-acid substitution in polyomavirus VP1 correlates with plaque size and hemagglutination behavior.</title>
        <authorList>
            <person name="Freund R."/>
            <person name="Garcea R.L."/>
            <person name="Sahli R."/>
            <person name="Benjamin T.L."/>
        </authorList>
    </citation>
    <scope>NUCLEOTIDE SEQUENCE [GENOMIC DNA]</scope>
</reference>
<reference key="2">
    <citation type="journal article" date="2009" name="Virology">
        <title>The Polyomaviridae: Contributions of virus structure to our understanding of virus receptors and infectious entry.</title>
        <authorList>
            <person name="Neu U."/>
            <person name="Stehle T."/>
            <person name="Atwood W.J."/>
        </authorList>
    </citation>
    <scope>REVIEW</scope>
</reference>
<reference key="3">
    <citation type="journal article" date="1994" name="Nature">
        <title>Structure of murine polyomavirus complexed with an oligosaccharide receptor fragment.</title>
        <authorList>
            <person name="Stehle T."/>
            <person name="Yan Y."/>
            <person name="Benjamin T.L."/>
            <person name="Harrison S.C."/>
        </authorList>
    </citation>
    <scope>X-RAY CRYSTALLOGRAPHY (3.65 ANGSTROMS)</scope>
</reference>
<reference key="4">
    <citation type="journal article" date="1996" name="Structure">
        <title>Crystal structures of murine polyomavirus in complex with straight-chain and branched-chain sialyloligosaccharide receptor fragments.</title>
        <authorList>
            <person name="Stehle T."/>
            <person name="Harrison S.C."/>
        </authorList>
    </citation>
    <scope>X-RAY CRYSTALLOGRAPHY (3.65 ANGSTROMS)</scope>
</reference>
<reference key="5">
    <citation type="journal article" date="1997" name="EMBO J.">
        <title>High-resolution structure of a polyomavirus VP1-oligosaccharide complex: implications for assembly and receptor binding.</title>
        <authorList>
            <person name="Stehle T."/>
            <person name="Harrison S.C."/>
        </authorList>
    </citation>
    <scope>X-RAY CRYSTALLOGRAPHY (1.9 ANGSTROMS)</scope>
</reference>
<evidence type="ECO:0000250" key="1"/>
<evidence type="ECO:0000250" key="2">
    <source>
        <dbReference type="UniProtKB" id="P03087"/>
    </source>
</evidence>
<evidence type="ECO:0000305" key="3"/>
<evidence type="ECO:0000305" key="4">
    <source>
    </source>
</evidence>
<evidence type="ECO:0007829" key="5">
    <source>
        <dbReference type="PDB" id="5CPU"/>
    </source>
</evidence>
<evidence type="ECO:0007829" key="6">
    <source>
        <dbReference type="PDB" id="7K25"/>
    </source>
</evidence>
<sequence length="384" mass="42505">MAPKRKSGVSKCETKCTKACPRPAPVPKLLIKGGMEVLDLVTGPDSVTEIEAFLNPRMGQPPTPESLTEGGQYYGWSRGINLATSDTEDSPGNNTLPTWSMAKLQLPMLNEDLTCDTLQMWEAVSVKTEVVGSGSLLDVHGFNKPTDTVNTKGISTPVEGSQYHVFAVGGEPLDLQGLVTDARTKYKEEGVVTIKTITKKDMVNKDQVLNPISKAKLDKDGMYPVEIWHPDPAKNENTRYFGNYTGGTTTPPVLQFTNTLTTVLLDENGVGPLCKGEGLYLSCVDIMGWRVTRNYDVHHWRGLPRYFKITLRKRWVKNPYPMASLISSLFNNMLPQVQGQPMEGENTQVEEVRVYDGTEPVPGDPDMTRYVDRFGKTKTVFPGN</sequence>
<organismHost>
    <name type="scientific">Mus musculus</name>
    <name type="common">Mouse</name>
    <dbReference type="NCBI Taxonomy" id="10090"/>
</organismHost>